<dbReference type="EMBL" id="BA000022">
    <property type="protein sequence ID" value="BAA17320.1"/>
    <property type="molecule type" value="Genomic_DNA"/>
</dbReference>
<dbReference type="PIR" id="S77473">
    <property type="entry name" value="S77473"/>
</dbReference>
<dbReference type="FunCoup" id="P73292">
    <property type="interactions" value="274"/>
</dbReference>
<dbReference type="STRING" id="1148.gene:10498183"/>
<dbReference type="PaxDb" id="1148-1652398"/>
<dbReference type="EnsemblBacteria" id="BAA17320">
    <property type="protein sequence ID" value="BAA17320"/>
    <property type="gene ID" value="BAA17320"/>
</dbReference>
<dbReference type="KEGG" id="syn:ssl3445"/>
<dbReference type="eggNOG" id="COG0254">
    <property type="taxonomic scope" value="Bacteria"/>
</dbReference>
<dbReference type="InParanoid" id="P73292"/>
<dbReference type="PhylomeDB" id="P73292"/>
<dbReference type="Proteomes" id="UP000001425">
    <property type="component" value="Chromosome"/>
</dbReference>
<dbReference type="GO" id="GO:1990904">
    <property type="term" value="C:ribonucleoprotein complex"/>
    <property type="evidence" value="ECO:0007669"/>
    <property type="project" value="UniProtKB-KW"/>
</dbReference>
<dbReference type="GO" id="GO:0005840">
    <property type="term" value="C:ribosome"/>
    <property type="evidence" value="ECO:0007669"/>
    <property type="project" value="UniProtKB-KW"/>
</dbReference>
<dbReference type="GO" id="GO:0019843">
    <property type="term" value="F:rRNA binding"/>
    <property type="evidence" value="ECO:0007669"/>
    <property type="project" value="UniProtKB-KW"/>
</dbReference>
<dbReference type="GO" id="GO:0003735">
    <property type="term" value="F:structural constituent of ribosome"/>
    <property type="evidence" value="ECO:0007669"/>
    <property type="project" value="InterPro"/>
</dbReference>
<dbReference type="GO" id="GO:0006412">
    <property type="term" value="P:translation"/>
    <property type="evidence" value="ECO:0007669"/>
    <property type="project" value="UniProtKB-UniRule"/>
</dbReference>
<dbReference type="Gene3D" id="4.10.830.30">
    <property type="entry name" value="Ribosomal protein L31"/>
    <property type="match status" value="1"/>
</dbReference>
<dbReference type="HAMAP" id="MF_00501">
    <property type="entry name" value="Ribosomal_bL31_1"/>
    <property type="match status" value="1"/>
</dbReference>
<dbReference type="InterPro" id="IPR034704">
    <property type="entry name" value="Ribosomal_bL28/bL31-like_sf"/>
</dbReference>
<dbReference type="InterPro" id="IPR002150">
    <property type="entry name" value="Ribosomal_bL31"/>
</dbReference>
<dbReference type="InterPro" id="IPR027491">
    <property type="entry name" value="Ribosomal_bL31_A"/>
</dbReference>
<dbReference type="InterPro" id="IPR042105">
    <property type="entry name" value="Ribosomal_bL31_sf"/>
</dbReference>
<dbReference type="NCBIfam" id="TIGR00105">
    <property type="entry name" value="L31"/>
    <property type="match status" value="1"/>
</dbReference>
<dbReference type="NCBIfam" id="NF000612">
    <property type="entry name" value="PRK00019.1"/>
    <property type="match status" value="1"/>
</dbReference>
<dbReference type="NCBIfam" id="NF001809">
    <property type="entry name" value="PRK00528.1"/>
    <property type="match status" value="1"/>
</dbReference>
<dbReference type="PANTHER" id="PTHR33280">
    <property type="entry name" value="50S RIBOSOMAL PROTEIN L31, CHLOROPLASTIC"/>
    <property type="match status" value="1"/>
</dbReference>
<dbReference type="PANTHER" id="PTHR33280:SF1">
    <property type="entry name" value="LARGE RIBOSOMAL SUBUNIT PROTEIN BL31C"/>
    <property type="match status" value="1"/>
</dbReference>
<dbReference type="Pfam" id="PF01197">
    <property type="entry name" value="Ribosomal_L31"/>
    <property type="match status" value="1"/>
</dbReference>
<dbReference type="PRINTS" id="PR01249">
    <property type="entry name" value="RIBOSOMALL31"/>
</dbReference>
<dbReference type="SUPFAM" id="SSF143800">
    <property type="entry name" value="L28p-like"/>
    <property type="match status" value="1"/>
</dbReference>
<dbReference type="PROSITE" id="PS01143">
    <property type="entry name" value="RIBOSOMAL_L31"/>
    <property type="match status" value="1"/>
</dbReference>
<name>RL31_SYNY3</name>
<comment type="function">
    <text evidence="1">Binds the 23S rRNA.</text>
</comment>
<comment type="subunit">
    <text evidence="1">Part of the 50S ribosomal subunit.</text>
</comment>
<comment type="similarity">
    <text evidence="1">Belongs to the bacterial ribosomal protein bL31 family. Type A subfamily.</text>
</comment>
<protein>
    <recommendedName>
        <fullName evidence="1">Large ribosomal subunit protein bL31</fullName>
    </recommendedName>
    <alternativeName>
        <fullName evidence="2">50S ribosomal protein L31</fullName>
    </alternativeName>
</protein>
<organism>
    <name type="scientific">Synechocystis sp. (strain ATCC 27184 / PCC 6803 / Kazusa)</name>
    <dbReference type="NCBI Taxonomy" id="1111708"/>
    <lineage>
        <taxon>Bacteria</taxon>
        <taxon>Bacillati</taxon>
        <taxon>Cyanobacteriota</taxon>
        <taxon>Cyanophyceae</taxon>
        <taxon>Synechococcales</taxon>
        <taxon>Merismopediaceae</taxon>
        <taxon>Synechocystis</taxon>
    </lineage>
</organism>
<evidence type="ECO:0000255" key="1">
    <source>
        <dbReference type="HAMAP-Rule" id="MF_00501"/>
    </source>
</evidence>
<evidence type="ECO:0000305" key="2"/>
<proteinExistence type="inferred from homology"/>
<accession>P73292</accession>
<sequence length="81" mass="9304">MPKADIHPTWYPDAKVTCNGEVIMTVGSTKPEINVEIWSGNHPFYTGTQKIIDTEGRVDRFMRKYGMKEKTTGDKQDKKKK</sequence>
<reference key="1">
    <citation type="journal article" date="1996" name="DNA Res.">
        <title>Sequence analysis of the genome of the unicellular cyanobacterium Synechocystis sp. strain PCC6803. II. Sequence determination of the entire genome and assignment of potential protein-coding regions.</title>
        <authorList>
            <person name="Kaneko T."/>
            <person name="Sato S."/>
            <person name="Kotani H."/>
            <person name="Tanaka A."/>
            <person name="Asamizu E."/>
            <person name="Nakamura Y."/>
            <person name="Miyajima N."/>
            <person name="Hirosawa M."/>
            <person name="Sugiura M."/>
            <person name="Sasamoto S."/>
            <person name="Kimura T."/>
            <person name="Hosouchi T."/>
            <person name="Matsuno A."/>
            <person name="Muraki A."/>
            <person name="Nakazaki N."/>
            <person name="Naruo K."/>
            <person name="Okumura S."/>
            <person name="Shimpo S."/>
            <person name="Takeuchi C."/>
            <person name="Wada T."/>
            <person name="Watanabe A."/>
            <person name="Yamada M."/>
            <person name="Yasuda M."/>
            <person name="Tabata S."/>
        </authorList>
    </citation>
    <scope>NUCLEOTIDE SEQUENCE [LARGE SCALE GENOMIC DNA]</scope>
    <source>
        <strain>ATCC 27184 / PCC 6803 / Kazusa</strain>
    </source>
</reference>
<gene>
    <name evidence="1" type="primary">rpmE</name>
    <name evidence="1" type="synonym">rpl31</name>
    <name type="ordered locus">ssl3445</name>
</gene>
<feature type="chain" id="PRO_0000173168" description="Large ribosomal subunit protein bL31">
    <location>
        <begin position="1"/>
        <end position="81"/>
    </location>
</feature>
<keyword id="KW-1185">Reference proteome</keyword>
<keyword id="KW-0687">Ribonucleoprotein</keyword>
<keyword id="KW-0689">Ribosomal protein</keyword>
<keyword id="KW-0694">RNA-binding</keyword>
<keyword id="KW-0699">rRNA-binding</keyword>